<organism>
    <name type="scientific">Nitratidesulfovibrio vulgaris (strain DSM 19637 / Miyazaki F)</name>
    <name type="common">Desulfovibrio vulgaris</name>
    <dbReference type="NCBI Taxonomy" id="883"/>
    <lineage>
        <taxon>Bacteria</taxon>
        <taxon>Pseudomonadati</taxon>
        <taxon>Thermodesulfobacteriota</taxon>
        <taxon>Desulfovibrionia</taxon>
        <taxon>Desulfovibrionales</taxon>
        <taxon>Desulfovibrionaceae</taxon>
        <taxon>Nitratidesulfovibrio</taxon>
    </lineage>
</organism>
<accession>B8DJI3</accession>
<reference key="1">
    <citation type="submission" date="2008-10" db="EMBL/GenBank/DDBJ databases">
        <title>Complete sequence of Desulfovibrio vulgaris str. 'Miyazaki F'.</title>
        <authorList>
            <person name="Lucas S."/>
            <person name="Copeland A."/>
            <person name="Lapidus A."/>
            <person name="Glavina del Rio T."/>
            <person name="Dalin E."/>
            <person name="Tice H."/>
            <person name="Bruce D."/>
            <person name="Goodwin L."/>
            <person name="Pitluck S."/>
            <person name="Sims D."/>
            <person name="Brettin T."/>
            <person name="Detter J.C."/>
            <person name="Han C."/>
            <person name="Larimer F."/>
            <person name="Land M."/>
            <person name="Hauser L."/>
            <person name="Kyrpides N."/>
            <person name="Mikhailova N."/>
            <person name="Hazen T.C."/>
            <person name="Richardson P."/>
        </authorList>
    </citation>
    <scope>NUCLEOTIDE SEQUENCE [LARGE SCALE GENOMIC DNA]</scope>
    <source>
        <strain>DSM 19637 / Miyazaki F</strain>
    </source>
</reference>
<gene>
    <name evidence="1" type="primary">tpiA</name>
    <name type="ordered locus">DvMF_0348</name>
</gene>
<proteinExistence type="inferred from homology"/>
<dbReference type="EC" id="5.3.1.1" evidence="1"/>
<dbReference type="EMBL" id="CP001197">
    <property type="protein sequence ID" value="ACL07305.1"/>
    <property type="molecule type" value="Genomic_DNA"/>
</dbReference>
<dbReference type="SMR" id="B8DJI3"/>
<dbReference type="STRING" id="883.DvMF_0348"/>
<dbReference type="KEGG" id="dvm:DvMF_0348"/>
<dbReference type="eggNOG" id="COG0149">
    <property type="taxonomic scope" value="Bacteria"/>
</dbReference>
<dbReference type="HOGENOM" id="CLU_024251_2_0_7"/>
<dbReference type="OrthoDB" id="9809429at2"/>
<dbReference type="UniPathway" id="UPA00109">
    <property type="reaction ID" value="UER00189"/>
</dbReference>
<dbReference type="UniPathway" id="UPA00138"/>
<dbReference type="GO" id="GO:0005829">
    <property type="term" value="C:cytosol"/>
    <property type="evidence" value="ECO:0007669"/>
    <property type="project" value="TreeGrafter"/>
</dbReference>
<dbReference type="GO" id="GO:0004807">
    <property type="term" value="F:triose-phosphate isomerase activity"/>
    <property type="evidence" value="ECO:0007669"/>
    <property type="project" value="UniProtKB-UniRule"/>
</dbReference>
<dbReference type="GO" id="GO:0006094">
    <property type="term" value="P:gluconeogenesis"/>
    <property type="evidence" value="ECO:0007669"/>
    <property type="project" value="UniProtKB-UniRule"/>
</dbReference>
<dbReference type="GO" id="GO:0046166">
    <property type="term" value="P:glyceraldehyde-3-phosphate biosynthetic process"/>
    <property type="evidence" value="ECO:0007669"/>
    <property type="project" value="TreeGrafter"/>
</dbReference>
<dbReference type="GO" id="GO:0019563">
    <property type="term" value="P:glycerol catabolic process"/>
    <property type="evidence" value="ECO:0007669"/>
    <property type="project" value="TreeGrafter"/>
</dbReference>
<dbReference type="GO" id="GO:0006096">
    <property type="term" value="P:glycolytic process"/>
    <property type="evidence" value="ECO:0007669"/>
    <property type="project" value="UniProtKB-UniRule"/>
</dbReference>
<dbReference type="CDD" id="cd00311">
    <property type="entry name" value="TIM"/>
    <property type="match status" value="1"/>
</dbReference>
<dbReference type="FunFam" id="3.20.20.70:FF:000016">
    <property type="entry name" value="Triosephosphate isomerase"/>
    <property type="match status" value="1"/>
</dbReference>
<dbReference type="Gene3D" id="3.20.20.70">
    <property type="entry name" value="Aldolase class I"/>
    <property type="match status" value="1"/>
</dbReference>
<dbReference type="HAMAP" id="MF_00147_B">
    <property type="entry name" value="TIM_B"/>
    <property type="match status" value="1"/>
</dbReference>
<dbReference type="InterPro" id="IPR013785">
    <property type="entry name" value="Aldolase_TIM"/>
</dbReference>
<dbReference type="InterPro" id="IPR035990">
    <property type="entry name" value="TIM_sf"/>
</dbReference>
<dbReference type="InterPro" id="IPR022896">
    <property type="entry name" value="TrioseP_Isoase_bac/euk"/>
</dbReference>
<dbReference type="InterPro" id="IPR000652">
    <property type="entry name" value="Triosephosphate_isomerase"/>
</dbReference>
<dbReference type="InterPro" id="IPR020861">
    <property type="entry name" value="Triosephosphate_isomerase_AS"/>
</dbReference>
<dbReference type="NCBIfam" id="TIGR00419">
    <property type="entry name" value="tim"/>
    <property type="match status" value="1"/>
</dbReference>
<dbReference type="PANTHER" id="PTHR21139">
    <property type="entry name" value="TRIOSEPHOSPHATE ISOMERASE"/>
    <property type="match status" value="1"/>
</dbReference>
<dbReference type="PANTHER" id="PTHR21139:SF42">
    <property type="entry name" value="TRIOSEPHOSPHATE ISOMERASE"/>
    <property type="match status" value="1"/>
</dbReference>
<dbReference type="Pfam" id="PF00121">
    <property type="entry name" value="TIM"/>
    <property type="match status" value="1"/>
</dbReference>
<dbReference type="SUPFAM" id="SSF51351">
    <property type="entry name" value="Triosephosphate isomerase (TIM)"/>
    <property type="match status" value="1"/>
</dbReference>
<dbReference type="PROSITE" id="PS00171">
    <property type="entry name" value="TIM_1"/>
    <property type="match status" value="1"/>
</dbReference>
<dbReference type="PROSITE" id="PS51440">
    <property type="entry name" value="TIM_2"/>
    <property type="match status" value="1"/>
</dbReference>
<protein>
    <recommendedName>
        <fullName evidence="1">Triosephosphate isomerase</fullName>
        <shortName evidence="1">TIM</shortName>
        <shortName evidence="1">TPI</shortName>
        <ecNumber evidence="1">5.3.1.1</ecNumber>
    </recommendedName>
    <alternativeName>
        <fullName evidence="1">Triose-phosphate isomerase</fullName>
    </alternativeName>
</protein>
<sequence length="251" mass="26199">MKKLMAANWKMYKTAGEARTTAASLAALTADTLPDDREVVIFPQFTALSPVADALRHATGYSVGGQDVYPAAEGAYTGEISPGMLMDCGCAWVLTGHSERRHVIGESDELVGAKTAFSINAGLKVVLCIGETIEEREAGRLGEVLERQLETGLAGVKGDAVPAAIAVAYEPVWAIGTGKVAGPPEIVEAHALVRQLLVARFGEGGVAVRILYGGSVKPENAREIIALDNVDGVLVGGASLQADSFSRIILA</sequence>
<comment type="function">
    <text evidence="1">Involved in the gluconeogenesis. Catalyzes stereospecifically the conversion of dihydroxyacetone phosphate (DHAP) to D-glyceraldehyde-3-phosphate (G3P).</text>
</comment>
<comment type="catalytic activity">
    <reaction evidence="1">
        <text>D-glyceraldehyde 3-phosphate = dihydroxyacetone phosphate</text>
        <dbReference type="Rhea" id="RHEA:18585"/>
        <dbReference type="ChEBI" id="CHEBI:57642"/>
        <dbReference type="ChEBI" id="CHEBI:59776"/>
        <dbReference type="EC" id="5.3.1.1"/>
    </reaction>
</comment>
<comment type="pathway">
    <text evidence="1">Carbohydrate biosynthesis; gluconeogenesis.</text>
</comment>
<comment type="pathway">
    <text evidence="1">Carbohydrate degradation; glycolysis; D-glyceraldehyde 3-phosphate from glycerone phosphate: step 1/1.</text>
</comment>
<comment type="subunit">
    <text evidence="1">Homodimer.</text>
</comment>
<comment type="subcellular location">
    <subcellularLocation>
        <location evidence="1">Cytoplasm</location>
    </subcellularLocation>
</comment>
<comment type="similarity">
    <text evidence="1">Belongs to the triosephosphate isomerase family.</text>
</comment>
<name>TPIS_NITV9</name>
<evidence type="ECO:0000255" key="1">
    <source>
        <dbReference type="HAMAP-Rule" id="MF_00147"/>
    </source>
</evidence>
<feature type="chain" id="PRO_1000118001" description="Triosephosphate isomerase">
    <location>
        <begin position="1"/>
        <end position="251"/>
    </location>
</feature>
<feature type="active site" description="Electrophile" evidence="1">
    <location>
        <position position="97"/>
    </location>
</feature>
<feature type="active site" description="Proton acceptor" evidence="1">
    <location>
        <position position="170"/>
    </location>
</feature>
<feature type="binding site" evidence="1">
    <location>
        <begin position="8"/>
        <end position="10"/>
    </location>
    <ligand>
        <name>substrate</name>
    </ligand>
</feature>
<feature type="binding site" evidence="1">
    <location>
        <position position="176"/>
    </location>
    <ligand>
        <name>substrate</name>
    </ligand>
</feature>
<feature type="binding site" evidence="1">
    <location>
        <position position="215"/>
    </location>
    <ligand>
        <name>substrate</name>
    </ligand>
</feature>
<feature type="binding site" evidence="1">
    <location>
        <begin position="236"/>
        <end position="237"/>
    </location>
    <ligand>
        <name>substrate</name>
    </ligand>
</feature>
<keyword id="KW-0963">Cytoplasm</keyword>
<keyword id="KW-0312">Gluconeogenesis</keyword>
<keyword id="KW-0324">Glycolysis</keyword>
<keyword id="KW-0413">Isomerase</keyword>